<evidence type="ECO:0000250" key="1">
    <source>
        <dbReference type="UniProtKB" id="P14769"/>
    </source>
</evidence>
<evidence type="ECO:0000255" key="2"/>
<evidence type="ECO:0000305" key="3"/>
<feature type="chain" id="PRO_0000311972" description="Glycosyltransferase 6 domain-containing protein 1">
    <location>
        <begin position="1"/>
        <end position="308"/>
    </location>
</feature>
<feature type="topological domain" description="Cytoplasmic" evidence="2">
    <location>
        <begin position="1"/>
        <end position="6"/>
    </location>
</feature>
<feature type="transmembrane region" description="Helical; Signal-anchor for type II membrane protein" evidence="2">
    <location>
        <begin position="7"/>
        <end position="23"/>
    </location>
</feature>
<feature type="topological domain" description="Lumenal" evidence="2">
    <location>
        <begin position="24"/>
        <end position="308"/>
    </location>
</feature>
<feature type="active site" description="Nucleophile" evidence="1">
    <location>
        <position position="263"/>
    </location>
</feature>
<feature type="binding site" evidence="1">
    <location>
        <begin position="82"/>
        <end position="87"/>
    </location>
    <ligand>
        <name>substrate</name>
    </ligand>
</feature>
<feature type="binding site" evidence="1">
    <location>
        <begin position="173"/>
        <end position="175"/>
    </location>
    <ligand>
        <name>substrate</name>
    </ligand>
</feature>
<feature type="binding site" evidence="1">
    <location>
        <begin position="195"/>
        <end position="198"/>
    </location>
    <ligand>
        <name>substrate</name>
    </ligand>
</feature>
<feature type="glycosylation site" description="N-linked (GlcNAc...) asparagine" evidence="2">
    <location>
        <position position="74"/>
    </location>
</feature>
<feature type="sequence conflict" description="In Ref. 1; BAE01538." evidence="3" ref="1">
    <original>K</original>
    <variation>R</variation>
    <location>
        <position position="4"/>
    </location>
</feature>
<feature type="sequence conflict" description="In Ref. 1; BAB21880." evidence="3" ref="1">
    <original>V</original>
    <variation>F</variation>
    <location>
        <position position="81"/>
    </location>
</feature>
<feature type="sequence conflict" description="In Ref. 1; BAB21880." evidence="3" ref="1">
    <original>I</original>
    <variation>T</variation>
    <location>
        <position position="218"/>
    </location>
</feature>
<keyword id="KW-0325">Glycoprotein</keyword>
<keyword id="KW-0328">Glycosyltransferase</keyword>
<keyword id="KW-0472">Membrane</keyword>
<keyword id="KW-1185">Reference proteome</keyword>
<keyword id="KW-0735">Signal-anchor</keyword>
<keyword id="KW-0808">Transferase</keyword>
<keyword id="KW-0812">Transmembrane</keyword>
<keyword id="KW-1133">Transmembrane helix</keyword>
<proteinExistence type="evidence at transcript level"/>
<accession>Q4R5T7</accession>
<accession>Q9BH00</accession>
<name>GL6D1_MACFA</name>
<comment type="cofactor">
    <cofactor evidence="1">
        <name>Mn(2+)</name>
        <dbReference type="ChEBI" id="CHEBI:29035"/>
    </cofactor>
    <text evidence="1">Binds 1 Mn(2+) ion per subunit.</text>
</comment>
<comment type="subcellular location">
    <subcellularLocation>
        <location evidence="3">Membrane</location>
        <topology evidence="3">Single-pass type II membrane protein</topology>
    </subcellularLocation>
</comment>
<comment type="similarity">
    <text evidence="3">Belongs to the glycosyltransferase 6 family.</text>
</comment>
<sequence>MNSKRMLLLVLFAFSLMLVERYFRNHQVEELRLSDWFHPRKRPDVITKTDWLAPIVWEGTFDRQVLEKHYRRRNITVGLAVFATGRFAEEYLRLFLHSANKHFMTGYRVIFYIMVDAFLQLPDIQPSPLRTFKAFEVDAERWWLEGSLVYMKSLGEHITSHIQDEVDFLFSMAVNQVFQNEFGVETLGPLVAQLHAWWYFRNTKNFPYERRPTSAASIPFGQGDFYYGSLMVGGTPRNILDFIEEYLNGVIHDIKNGLNSTYEKHLNKYFYLNKPTKLLSPEYSWDLAFSPPPQIQYVKVAHDSHRKL</sequence>
<protein>
    <recommendedName>
        <fullName>Glycosyltransferase 6 domain-containing protein 1</fullName>
        <ecNumber>2.4.1.-</ecNumber>
    </recommendedName>
</protein>
<organism>
    <name type="scientific">Macaca fascicularis</name>
    <name type="common">Crab-eating macaque</name>
    <name type="synonym">Cynomolgus monkey</name>
    <dbReference type="NCBI Taxonomy" id="9541"/>
    <lineage>
        <taxon>Eukaryota</taxon>
        <taxon>Metazoa</taxon>
        <taxon>Chordata</taxon>
        <taxon>Craniata</taxon>
        <taxon>Vertebrata</taxon>
        <taxon>Euteleostomi</taxon>
        <taxon>Mammalia</taxon>
        <taxon>Eutheria</taxon>
        <taxon>Euarchontoglires</taxon>
        <taxon>Primates</taxon>
        <taxon>Haplorrhini</taxon>
        <taxon>Catarrhini</taxon>
        <taxon>Cercopithecidae</taxon>
        <taxon>Cercopithecinae</taxon>
        <taxon>Macaca</taxon>
    </lineage>
</organism>
<dbReference type="EC" id="2.4.1.-"/>
<dbReference type="EMBL" id="AB055256">
    <property type="protein sequence ID" value="BAB21880.1"/>
    <property type="molecule type" value="mRNA"/>
</dbReference>
<dbReference type="EMBL" id="AB169456">
    <property type="protein sequence ID" value="BAE01538.1"/>
    <property type="molecule type" value="mRNA"/>
</dbReference>
<dbReference type="RefSeq" id="NP_001270822.1">
    <property type="nucleotide sequence ID" value="NM_001283893.1"/>
</dbReference>
<dbReference type="SMR" id="Q4R5T7"/>
<dbReference type="STRING" id="9541.ENSMFAP00000002347"/>
<dbReference type="CAZy" id="GT6">
    <property type="family name" value="Glycosyltransferase Family 6"/>
</dbReference>
<dbReference type="GlyCosmos" id="Q4R5T7">
    <property type="glycosylation" value="1 site, No reported glycans"/>
</dbReference>
<dbReference type="eggNOG" id="ENOG502RU0J">
    <property type="taxonomic scope" value="Eukaryota"/>
</dbReference>
<dbReference type="Proteomes" id="UP000233100">
    <property type="component" value="Unplaced"/>
</dbReference>
<dbReference type="GO" id="GO:0005794">
    <property type="term" value="C:Golgi apparatus"/>
    <property type="evidence" value="ECO:0007669"/>
    <property type="project" value="TreeGrafter"/>
</dbReference>
<dbReference type="GO" id="GO:0016020">
    <property type="term" value="C:membrane"/>
    <property type="evidence" value="ECO:0007669"/>
    <property type="project" value="UniProtKB-SubCell"/>
</dbReference>
<dbReference type="GO" id="GO:0031982">
    <property type="term" value="C:vesicle"/>
    <property type="evidence" value="ECO:0007669"/>
    <property type="project" value="TreeGrafter"/>
</dbReference>
<dbReference type="GO" id="GO:0016758">
    <property type="term" value="F:hexosyltransferase activity"/>
    <property type="evidence" value="ECO:0007669"/>
    <property type="project" value="InterPro"/>
</dbReference>
<dbReference type="GO" id="GO:0005975">
    <property type="term" value="P:carbohydrate metabolic process"/>
    <property type="evidence" value="ECO:0007669"/>
    <property type="project" value="InterPro"/>
</dbReference>
<dbReference type="GO" id="GO:0030259">
    <property type="term" value="P:lipid glycosylation"/>
    <property type="evidence" value="ECO:0007669"/>
    <property type="project" value="TreeGrafter"/>
</dbReference>
<dbReference type="FunFam" id="3.90.550.10:FF:000022">
    <property type="entry name" value="Histo-blood group ABO system transferase"/>
    <property type="match status" value="1"/>
</dbReference>
<dbReference type="Gene3D" id="3.90.550.10">
    <property type="entry name" value="Spore Coat Polysaccharide Biosynthesis Protein SpsA, Chain A"/>
    <property type="match status" value="1"/>
</dbReference>
<dbReference type="InterPro" id="IPR005076">
    <property type="entry name" value="Glyco_trans_6"/>
</dbReference>
<dbReference type="InterPro" id="IPR029044">
    <property type="entry name" value="Nucleotide-diphossugar_trans"/>
</dbReference>
<dbReference type="PANTHER" id="PTHR10462:SF27">
    <property type="entry name" value="GLYCOSYLTRANSFERASE 6 DOMAIN-CONTAINING PROTEIN 1-RELATED"/>
    <property type="match status" value="1"/>
</dbReference>
<dbReference type="PANTHER" id="PTHR10462">
    <property type="entry name" value="GLYCOSYLTRANSFERASE-RELATED"/>
    <property type="match status" value="1"/>
</dbReference>
<dbReference type="Pfam" id="PF03414">
    <property type="entry name" value="Glyco_transf_6"/>
    <property type="match status" value="1"/>
</dbReference>
<dbReference type="SUPFAM" id="SSF53448">
    <property type="entry name" value="Nucleotide-diphospho-sugar transferases"/>
    <property type="match status" value="1"/>
</dbReference>
<reference key="1">
    <citation type="journal article" date="2002" name="Genome Biol.">
        <title>Prediction of unidentified human genes on the basis of sequence similarity to novel cDNAs from cynomolgus monkey brain.</title>
        <authorList>
            <person name="Osada N."/>
            <person name="Hida M."/>
            <person name="Kusuda J."/>
            <person name="Tanuma R."/>
            <person name="Hirata M."/>
            <person name="Hirai M."/>
            <person name="Terao K."/>
            <person name="Suzuki Y."/>
            <person name="Sugano S."/>
            <person name="Hashimoto K."/>
        </authorList>
    </citation>
    <scope>NUCLEOTIDE SEQUENCE [LARGE SCALE MRNA]</scope>
    <source>
        <tissue>Frontal cortex</tissue>
    </source>
</reference>
<reference key="2">
    <citation type="submission" date="2005-06" db="EMBL/GenBank/DDBJ databases">
        <title>DNA sequences of macaque genes expressed in brain or testis and its evolutionary implications.</title>
        <authorList>
            <consortium name="International consortium for macaque cDNA sequencing and analysis"/>
        </authorList>
    </citation>
    <scope>NUCLEOTIDE SEQUENCE [LARGE SCALE MRNA]</scope>
    <source>
        <tissue>Testis</tissue>
    </source>
</reference>
<gene>
    <name type="primary">GLT6D1</name>
    <name type="ORF">QflA-10350</name>
    <name type="ORF">QtsA-20904</name>
</gene>